<gene>
    <name evidence="1" type="primary">ureG</name>
</gene>
<accession>Q9L638</accession>
<protein>
    <recommendedName>
        <fullName evidence="1">Urease accessory protein UreG</fullName>
    </recommendedName>
</protein>
<proteinExistence type="inferred from homology"/>
<name>UREG_PROS9</name>
<evidence type="ECO:0000255" key="1">
    <source>
        <dbReference type="HAMAP-Rule" id="MF_01389"/>
    </source>
</evidence>
<feature type="chain" id="PRO_0000347422" description="Urease accessory protein UreG">
    <location>
        <begin position="1"/>
        <end position="201"/>
    </location>
</feature>
<feature type="binding site" evidence="1">
    <location>
        <begin position="11"/>
        <end position="18"/>
    </location>
    <ligand>
        <name>GTP</name>
        <dbReference type="ChEBI" id="CHEBI:37565"/>
    </ligand>
</feature>
<sequence length="201" mass="21780">MSSKLRVGVAGPVGSGKTALVETLCIALKKRYKIAVVTNDIYTKEDANFLIKKKILEEGRIVGVETGGCPHTAIREDCSLNKNAVMDLENKYDPLDFIFVESGGDNLAASFSPELVDLSIYVIDVSAGDKIPRKGGPGITRSDLLLINKIDLADMVGANLNIMQNDTNMMRDGKPWFFTNLSSGSGVDNVIKYLVAQIPNI</sequence>
<comment type="function">
    <text evidence="1">Facilitates the functional incorporation of the urease nickel metallocenter. This process requires GTP hydrolysis, probably effectuated by UreG.</text>
</comment>
<comment type="subunit">
    <text evidence="1">Homodimer. UreD, UreF and UreG form a complex that acts as a GTP-hydrolysis-dependent molecular chaperone, activating the urease apoprotein by helping to assemble the nickel containing metallocenter of UreC. The UreE protein probably delivers the nickel.</text>
</comment>
<comment type="subcellular location">
    <subcellularLocation>
        <location evidence="1">Cytoplasm</location>
    </subcellularLocation>
</comment>
<comment type="similarity">
    <text evidence="1">Belongs to the SIMIBI class G3E GTPase family. UreG subfamily.</text>
</comment>
<organism>
    <name type="scientific">Prochlorococcus marinus subsp. pastoris (strain PCC 9511)</name>
    <dbReference type="NCBI Taxonomy" id="100363"/>
    <lineage>
        <taxon>Bacteria</taxon>
        <taxon>Bacillati</taxon>
        <taxon>Cyanobacteriota</taxon>
        <taxon>Cyanophyceae</taxon>
        <taxon>Synechococcales</taxon>
        <taxon>Prochlorococcaceae</taxon>
        <taxon>Prochlorococcus</taxon>
    </lineage>
</organism>
<dbReference type="EMBL" id="AF242489">
    <property type="protein sequence ID" value="AAF70254.1"/>
    <property type="molecule type" value="Genomic_DNA"/>
</dbReference>
<dbReference type="SMR" id="Q9L638"/>
<dbReference type="GO" id="GO:0005737">
    <property type="term" value="C:cytoplasm"/>
    <property type="evidence" value="ECO:0007669"/>
    <property type="project" value="UniProtKB-SubCell"/>
</dbReference>
<dbReference type="GO" id="GO:0005525">
    <property type="term" value="F:GTP binding"/>
    <property type="evidence" value="ECO:0007669"/>
    <property type="project" value="UniProtKB-KW"/>
</dbReference>
<dbReference type="GO" id="GO:0003924">
    <property type="term" value="F:GTPase activity"/>
    <property type="evidence" value="ECO:0007669"/>
    <property type="project" value="InterPro"/>
</dbReference>
<dbReference type="GO" id="GO:0016151">
    <property type="term" value="F:nickel cation binding"/>
    <property type="evidence" value="ECO:0007669"/>
    <property type="project" value="UniProtKB-UniRule"/>
</dbReference>
<dbReference type="GO" id="GO:0043419">
    <property type="term" value="P:urea catabolic process"/>
    <property type="evidence" value="ECO:0007669"/>
    <property type="project" value="InterPro"/>
</dbReference>
<dbReference type="CDD" id="cd05540">
    <property type="entry name" value="UreG"/>
    <property type="match status" value="1"/>
</dbReference>
<dbReference type="FunFam" id="3.40.50.300:FF:000208">
    <property type="entry name" value="Urease accessory protein UreG"/>
    <property type="match status" value="1"/>
</dbReference>
<dbReference type="Gene3D" id="3.40.50.300">
    <property type="entry name" value="P-loop containing nucleotide triphosphate hydrolases"/>
    <property type="match status" value="1"/>
</dbReference>
<dbReference type="HAMAP" id="MF_01389">
    <property type="entry name" value="UreG"/>
    <property type="match status" value="1"/>
</dbReference>
<dbReference type="InterPro" id="IPR003495">
    <property type="entry name" value="CobW/HypB/UreG_nucleotide-bd"/>
</dbReference>
<dbReference type="InterPro" id="IPR027417">
    <property type="entry name" value="P-loop_NTPase"/>
</dbReference>
<dbReference type="InterPro" id="IPR004400">
    <property type="entry name" value="UreG"/>
</dbReference>
<dbReference type="NCBIfam" id="TIGR00101">
    <property type="entry name" value="ureG"/>
    <property type="match status" value="1"/>
</dbReference>
<dbReference type="PANTHER" id="PTHR31715">
    <property type="entry name" value="UREASE ACCESSORY PROTEIN G"/>
    <property type="match status" value="1"/>
</dbReference>
<dbReference type="PANTHER" id="PTHR31715:SF0">
    <property type="entry name" value="UREASE ACCESSORY PROTEIN G"/>
    <property type="match status" value="1"/>
</dbReference>
<dbReference type="Pfam" id="PF02492">
    <property type="entry name" value="cobW"/>
    <property type="match status" value="1"/>
</dbReference>
<dbReference type="PIRSF" id="PIRSF005624">
    <property type="entry name" value="Ni-bind_GTPase"/>
    <property type="match status" value="1"/>
</dbReference>
<dbReference type="SUPFAM" id="SSF52540">
    <property type="entry name" value="P-loop containing nucleoside triphosphate hydrolases"/>
    <property type="match status" value="1"/>
</dbReference>
<keyword id="KW-0143">Chaperone</keyword>
<keyword id="KW-0963">Cytoplasm</keyword>
<keyword id="KW-0342">GTP-binding</keyword>
<keyword id="KW-0996">Nickel insertion</keyword>
<keyword id="KW-0547">Nucleotide-binding</keyword>
<reference key="1">
    <citation type="journal article" date="2000" name="Microbiology">
        <title>Prochlorococcus marinus strain PCC 9511, a picoplanktonic cyanobacterium, synthesizes the smallest urease.</title>
        <authorList>
            <person name="Palinska K.A."/>
            <person name="Jahns T."/>
            <person name="Rippka R."/>
            <person name="Tandeau de Marsac N."/>
        </authorList>
    </citation>
    <scope>NUCLEOTIDE SEQUENCE [GENOMIC DNA]</scope>
</reference>